<organism>
    <name type="scientific">Arabidopsis thaliana</name>
    <name type="common">Mouse-ear cress</name>
    <dbReference type="NCBI Taxonomy" id="3702"/>
    <lineage>
        <taxon>Eukaryota</taxon>
        <taxon>Viridiplantae</taxon>
        <taxon>Streptophyta</taxon>
        <taxon>Embryophyta</taxon>
        <taxon>Tracheophyta</taxon>
        <taxon>Spermatophyta</taxon>
        <taxon>Magnoliopsida</taxon>
        <taxon>eudicotyledons</taxon>
        <taxon>Gunneridae</taxon>
        <taxon>Pentapetalae</taxon>
        <taxon>rosids</taxon>
        <taxon>malvids</taxon>
        <taxon>Brassicales</taxon>
        <taxon>Brassicaceae</taxon>
        <taxon>Camelineae</taxon>
        <taxon>Arabidopsis</taxon>
    </lineage>
</organism>
<proteinExistence type="evidence at transcript level"/>
<keyword id="KW-0256">Endoplasmic reticulum</keyword>
<keyword id="KW-0472">Membrane</keyword>
<keyword id="KW-0479">Metal-binding</keyword>
<keyword id="KW-1185">Reference proteome</keyword>
<keyword id="KW-0808">Transferase</keyword>
<keyword id="KW-0812">Transmembrane</keyword>
<keyword id="KW-1133">Transmembrane helix</keyword>
<keyword id="KW-0833">Ubl conjugation pathway</keyword>
<keyword id="KW-0862">Zinc</keyword>
<keyword id="KW-0863">Zinc-finger</keyword>
<dbReference type="EC" id="2.3.2.27" evidence="6"/>
<dbReference type="EMBL" id="DQ059113">
    <property type="protein sequence ID" value="AAY57599.1"/>
    <property type="molecule type" value="mRNA"/>
</dbReference>
<dbReference type="EMBL" id="AB012247">
    <property type="protein sequence ID" value="BAB02675.1"/>
    <property type="molecule type" value="Genomic_DNA"/>
</dbReference>
<dbReference type="EMBL" id="CP002686">
    <property type="protein sequence ID" value="AEE75770.1"/>
    <property type="molecule type" value="Genomic_DNA"/>
</dbReference>
<dbReference type="EMBL" id="AK117158">
    <property type="protein sequence ID" value="BAC41836.1"/>
    <property type="molecule type" value="mRNA"/>
</dbReference>
<dbReference type="RefSeq" id="NP_188230.1">
    <property type="nucleotide sequence ID" value="NM_112479.3"/>
</dbReference>
<dbReference type="SMR" id="Q9LW77"/>
<dbReference type="BioGRID" id="6188">
    <property type="interactions" value="2"/>
</dbReference>
<dbReference type="FunCoup" id="Q9LW77">
    <property type="interactions" value="2905"/>
</dbReference>
<dbReference type="STRING" id="3702.Q9LW77"/>
<dbReference type="TCDB" id="3.A.16.1.5">
    <property type="family name" value="the endoplasmic reticular retrotranslocon (er-rt) family"/>
</dbReference>
<dbReference type="PaxDb" id="3702-AT3G16090.1"/>
<dbReference type="ProteomicsDB" id="232115"/>
<dbReference type="EnsemblPlants" id="AT3G16090.1">
    <property type="protein sequence ID" value="AT3G16090.1"/>
    <property type="gene ID" value="AT3G16090"/>
</dbReference>
<dbReference type="GeneID" id="820854"/>
<dbReference type="Gramene" id="AT3G16090.1">
    <property type="protein sequence ID" value="AT3G16090.1"/>
    <property type="gene ID" value="AT3G16090"/>
</dbReference>
<dbReference type="KEGG" id="ath:AT3G16090"/>
<dbReference type="Araport" id="AT3G16090"/>
<dbReference type="TAIR" id="AT3G16090">
    <property type="gene designation" value="HRD1A"/>
</dbReference>
<dbReference type="eggNOG" id="KOG0802">
    <property type="taxonomic scope" value="Eukaryota"/>
</dbReference>
<dbReference type="HOGENOM" id="CLU_009169_4_1_1"/>
<dbReference type="InParanoid" id="Q9LW77"/>
<dbReference type="OMA" id="SDNLCII"/>
<dbReference type="OrthoDB" id="7759664at2759"/>
<dbReference type="PhylomeDB" id="Q9LW77"/>
<dbReference type="UniPathway" id="UPA00143"/>
<dbReference type="PRO" id="PR:Q9LW77"/>
<dbReference type="Proteomes" id="UP000006548">
    <property type="component" value="Chromosome 3"/>
</dbReference>
<dbReference type="ExpressionAtlas" id="Q9LW77">
    <property type="expression patterns" value="baseline and differential"/>
</dbReference>
<dbReference type="GO" id="GO:0005789">
    <property type="term" value="C:endoplasmic reticulum membrane"/>
    <property type="evidence" value="ECO:0007669"/>
    <property type="project" value="UniProtKB-SubCell"/>
</dbReference>
<dbReference type="GO" id="GO:0016740">
    <property type="term" value="F:transferase activity"/>
    <property type="evidence" value="ECO:0007669"/>
    <property type="project" value="UniProtKB-KW"/>
</dbReference>
<dbReference type="GO" id="GO:0008270">
    <property type="term" value="F:zinc ion binding"/>
    <property type="evidence" value="ECO:0007669"/>
    <property type="project" value="UniProtKB-KW"/>
</dbReference>
<dbReference type="GO" id="GO:0016567">
    <property type="term" value="P:protein ubiquitination"/>
    <property type="evidence" value="ECO:0007669"/>
    <property type="project" value="UniProtKB-UniPathway"/>
</dbReference>
<dbReference type="CDD" id="cd16479">
    <property type="entry name" value="RING-H2_synoviolin"/>
    <property type="match status" value="1"/>
</dbReference>
<dbReference type="FunFam" id="3.30.40.10:FF:000194">
    <property type="entry name" value="ERAD-associated E3 ubiquitin-protein ligase HRD1A"/>
    <property type="match status" value="1"/>
</dbReference>
<dbReference type="Gene3D" id="3.30.40.10">
    <property type="entry name" value="Zinc/RING finger domain, C3HC4 (zinc finger)"/>
    <property type="match status" value="1"/>
</dbReference>
<dbReference type="InterPro" id="IPR050731">
    <property type="entry name" value="HRD1_E3_ubiq-ligases"/>
</dbReference>
<dbReference type="InterPro" id="IPR001841">
    <property type="entry name" value="Znf_RING"/>
</dbReference>
<dbReference type="InterPro" id="IPR013083">
    <property type="entry name" value="Znf_RING/FYVE/PHD"/>
</dbReference>
<dbReference type="PANTHER" id="PTHR22763:SF184">
    <property type="entry name" value="E3 UBIQUITIN-PROTEIN LIGASE SYNOVIOLIN"/>
    <property type="match status" value="1"/>
</dbReference>
<dbReference type="PANTHER" id="PTHR22763">
    <property type="entry name" value="RING ZINC FINGER PROTEIN"/>
    <property type="match status" value="1"/>
</dbReference>
<dbReference type="Pfam" id="PF13639">
    <property type="entry name" value="zf-RING_2"/>
    <property type="match status" value="1"/>
</dbReference>
<dbReference type="SMART" id="SM00184">
    <property type="entry name" value="RING"/>
    <property type="match status" value="1"/>
</dbReference>
<dbReference type="SUPFAM" id="SSF57850">
    <property type="entry name" value="RING/U-box"/>
    <property type="match status" value="1"/>
</dbReference>
<dbReference type="PROSITE" id="PS50089">
    <property type="entry name" value="ZF_RING_2"/>
    <property type="match status" value="1"/>
</dbReference>
<accession>Q9LW77</accession>
<gene>
    <name evidence="5" type="primary">HRD1A</name>
    <name evidence="7" type="ordered locus">At3g16090</name>
    <name evidence="8" type="ORF">MSL1.13</name>
</gene>
<reference key="1">
    <citation type="journal article" date="2005" name="Plant Physiol.">
        <title>Functional analysis of the RING-type ubiquitin ligase family of Arabidopsis.</title>
        <authorList>
            <person name="Stone S.L."/>
            <person name="Hauksdottir H."/>
            <person name="Troy A."/>
            <person name="Herschleb J."/>
            <person name="Kraft E."/>
            <person name="Callis J."/>
        </authorList>
    </citation>
    <scope>NUCLEOTIDE SEQUENCE [MRNA]</scope>
    <source>
        <strain>cv. Columbia</strain>
        <tissue>Leaf</tissue>
    </source>
</reference>
<reference key="2">
    <citation type="journal article" date="2000" name="DNA Res.">
        <title>Structural analysis of Arabidopsis thaliana chromosome 3. I. Sequence features of the regions of 4,504,864 bp covered by sixty P1 and TAC clones.</title>
        <authorList>
            <person name="Sato S."/>
            <person name="Nakamura Y."/>
            <person name="Kaneko T."/>
            <person name="Katoh T."/>
            <person name="Asamizu E."/>
            <person name="Tabata S."/>
        </authorList>
    </citation>
    <scope>NUCLEOTIDE SEQUENCE [LARGE SCALE GENOMIC DNA]</scope>
    <source>
        <strain>cv. Columbia</strain>
        <tissue>Leaf</tissue>
    </source>
</reference>
<reference key="3">
    <citation type="journal article" date="2017" name="Plant J.">
        <title>Araport11: a complete reannotation of the Arabidopsis thaliana reference genome.</title>
        <authorList>
            <person name="Cheng C.Y."/>
            <person name="Krishnakumar V."/>
            <person name="Chan A.P."/>
            <person name="Thibaud-Nissen F."/>
            <person name="Schobel S."/>
            <person name="Town C.D."/>
        </authorList>
    </citation>
    <scope>GENOME REANNOTATION</scope>
    <source>
        <strain>cv. Columbia</strain>
    </source>
</reference>
<reference key="4">
    <citation type="journal article" date="2002" name="Science">
        <title>Functional annotation of a full-length Arabidopsis cDNA collection.</title>
        <authorList>
            <person name="Seki M."/>
            <person name="Narusaka M."/>
            <person name="Kamiya A."/>
            <person name="Ishida J."/>
            <person name="Satou M."/>
            <person name="Sakurai T."/>
            <person name="Nakajima M."/>
            <person name="Enju A."/>
            <person name="Akiyama K."/>
            <person name="Oono Y."/>
            <person name="Muramatsu M."/>
            <person name="Hayashizaki Y."/>
            <person name="Kawai J."/>
            <person name="Carninci P."/>
            <person name="Itoh M."/>
            <person name="Ishii Y."/>
            <person name="Arakawa T."/>
            <person name="Shibata K."/>
            <person name="Shinagawa A."/>
            <person name="Shinozaki K."/>
        </authorList>
    </citation>
    <scope>NUCLEOTIDE SEQUENCE [LARGE SCALE MRNA]</scope>
    <source>
        <strain>cv. Columbia</strain>
    </source>
</reference>
<reference key="5">
    <citation type="journal article" date="2011" name="Proc. Natl. Acad. Sci. U.S.A.">
        <title>Conserved endoplasmic reticulum-associated degradation system to eliminate mutated receptor-like kinases in Arabidopsis.</title>
        <authorList>
            <person name="Su W."/>
            <person name="Liu Y."/>
            <person name="Xia Y."/>
            <person name="Hong Z."/>
            <person name="Li J."/>
        </authorList>
    </citation>
    <scope>FUNCTION</scope>
</reference>
<protein>
    <recommendedName>
        <fullName evidence="6">ERAD-associated E3 ubiquitin-protein ligase HRD1A</fullName>
        <shortName evidence="5">AtHrd1A</shortName>
        <ecNumber evidence="6">2.3.2.27</ecNumber>
    </recommendedName>
    <alternativeName>
        <fullName evidence="6">RING-type E3 ubiquitin transferase HRD1A</fullName>
    </alternativeName>
</protein>
<comment type="function">
    <text evidence="4">Probable component of the HRD1 ubiquitin ligase complex that mediates the rapid degradation of misfolded endoplasmic reticulum (ER) proteins, a process called ER-associated degradation (ERAD). Targets the misfolded LRR receptor kinase BRI1. Functions redundantly with HRD3B.</text>
</comment>
<comment type="catalytic activity">
    <reaction evidence="6">
        <text>S-ubiquitinyl-[E2 ubiquitin-conjugating enzyme]-L-cysteine + [acceptor protein]-L-lysine = [E2 ubiquitin-conjugating enzyme]-L-cysteine + N(6)-ubiquitinyl-[acceptor protein]-L-lysine.</text>
        <dbReference type="EC" id="2.3.2.27"/>
    </reaction>
</comment>
<comment type="pathway">
    <text evidence="6">Protein modification; protein ubiquitination.</text>
</comment>
<comment type="subcellular location">
    <subcellularLocation>
        <location evidence="6">Endoplasmic reticulum membrane</location>
        <topology evidence="1">Multi-pass membrane protein</topology>
    </subcellularLocation>
</comment>
<comment type="similarity">
    <text evidence="6">Belongs to the HRD1 family.</text>
</comment>
<sequence length="492" mass="56037">MIRLRTYAGLSFMATLAVIYHAFSSRGQFYPATVYLSTSKISLVLLLNMCLVLMLSLWHLVKFVFLGSLREAEVERLNEQAWRELMEILFAITIFRQDFSSGFLPLVVTLLLIKALHWLAQKRVEYIETTPSVSKLSHFRIVSFMGFLLLVDSLFMYSSIRHLIQSRQASVSLFFSFEYMILATTTVAIFVKYVFYVTDMLMDGQWEKKPVYTFYLELIRDLLHLSMYICFFFVIFMNYGVPLHLLRELYETFRNFQIRVSDYLRYRKITSNMNDRFPDATPEELTASDATCIICREEMTNAKKLICGHLFHVHCLRSWLERQQTCPTCRALVVPPENATSAAPGQRELHQGSQQGTSSSGNQGSEISSSAGVSNNSLSRHHARLQAAASAASVYGKSMVYPSANTVAWSSGVPGTEQVSTEPDQTLPQHNLPVENSHAYANMSETKLEEMRKSLETHLEILRNRLHFLETRKPESAGEPENKGKSVADAAE</sequence>
<name>HRD1A_ARATH</name>
<evidence type="ECO:0000255" key="1"/>
<evidence type="ECO:0000255" key="2">
    <source>
        <dbReference type="PROSITE-ProRule" id="PRU00175"/>
    </source>
</evidence>
<evidence type="ECO:0000256" key="3">
    <source>
        <dbReference type="SAM" id="MobiDB-lite"/>
    </source>
</evidence>
<evidence type="ECO:0000269" key="4">
    <source>
    </source>
</evidence>
<evidence type="ECO:0000303" key="5">
    <source>
    </source>
</evidence>
<evidence type="ECO:0000305" key="6"/>
<evidence type="ECO:0000312" key="7">
    <source>
        <dbReference type="Araport" id="AT3G16090"/>
    </source>
</evidence>
<evidence type="ECO:0000312" key="8">
    <source>
        <dbReference type="EMBL" id="BAC41836.1"/>
    </source>
</evidence>
<feature type="chain" id="PRO_0000431270" description="ERAD-associated E3 ubiquitin-protein ligase HRD1A">
    <location>
        <begin position="1"/>
        <end position="492"/>
    </location>
</feature>
<feature type="topological domain" description="Cytoplasmic" evidence="6">
    <location>
        <begin position="1"/>
        <end position="3"/>
    </location>
</feature>
<feature type="transmembrane region" description="Helical; Name=1" evidence="1">
    <location>
        <begin position="4"/>
        <end position="24"/>
    </location>
</feature>
<feature type="topological domain" description="Lumenal" evidence="6">
    <location>
        <begin position="25"/>
        <end position="40"/>
    </location>
</feature>
<feature type="transmembrane region" description="Helical; Name=2" evidence="1">
    <location>
        <begin position="41"/>
        <end position="61"/>
    </location>
</feature>
<feature type="topological domain" description="Cytoplasmic" evidence="6">
    <location>
        <begin position="62"/>
        <end position="98"/>
    </location>
</feature>
<feature type="transmembrane region" description="Helical; Name=3" evidence="1">
    <location>
        <begin position="99"/>
        <end position="119"/>
    </location>
</feature>
<feature type="topological domain" description="Lumenal" evidence="6">
    <location>
        <begin position="120"/>
        <end position="135"/>
    </location>
</feature>
<feature type="transmembrane region" description="Helical; Name=4" evidence="1">
    <location>
        <begin position="136"/>
        <end position="156"/>
    </location>
</feature>
<feature type="topological domain" description="Cytoplasmic" evidence="6">
    <location>
        <begin position="157"/>
        <end position="170"/>
    </location>
</feature>
<feature type="transmembrane region" description="Helical; Name=5" evidence="1">
    <location>
        <begin position="171"/>
        <end position="191"/>
    </location>
</feature>
<feature type="topological domain" description="Lumenal" evidence="6">
    <location>
        <begin position="192"/>
        <end position="221"/>
    </location>
</feature>
<feature type="transmembrane region" description="Helical; Name=6" evidence="1">
    <location>
        <begin position="222"/>
        <end position="242"/>
    </location>
</feature>
<feature type="topological domain" description="Cytoplasmic" evidence="6">
    <location>
        <begin position="243"/>
        <end position="492"/>
    </location>
</feature>
<feature type="zinc finger region" description="RING-type; atypical" evidence="2">
    <location>
        <begin position="292"/>
        <end position="330"/>
    </location>
</feature>
<feature type="region of interest" description="Disordered" evidence="3">
    <location>
        <begin position="339"/>
        <end position="379"/>
    </location>
</feature>
<feature type="region of interest" description="Disordered" evidence="3">
    <location>
        <begin position="470"/>
        <end position="492"/>
    </location>
</feature>
<feature type="compositionally biased region" description="Low complexity" evidence="3">
    <location>
        <begin position="351"/>
        <end position="378"/>
    </location>
</feature>
<feature type="compositionally biased region" description="Basic and acidic residues" evidence="3">
    <location>
        <begin position="470"/>
        <end position="486"/>
    </location>
</feature>